<proteinExistence type="inferred from homology"/>
<reference key="1">
    <citation type="journal article" date="2006" name="PLoS Genet.">
        <title>The complete genome sequence and comparative genome analysis of the high pathogenicity Yersinia enterocolitica strain 8081.</title>
        <authorList>
            <person name="Thomson N.R."/>
            <person name="Howard S."/>
            <person name="Wren B.W."/>
            <person name="Holden M.T.G."/>
            <person name="Crossman L."/>
            <person name="Challis G.L."/>
            <person name="Churcher C."/>
            <person name="Mungall K."/>
            <person name="Brooks K."/>
            <person name="Chillingworth T."/>
            <person name="Feltwell T."/>
            <person name="Abdellah Z."/>
            <person name="Hauser H."/>
            <person name="Jagels K."/>
            <person name="Maddison M."/>
            <person name="Moule S."/>
            <person name="Sanders M."/>
            <person name="Whitehead S."/>
            <person name="Quail M.A."/>
            <person name="Dougan G."/>
            <person name="Parkhill J."/>
            <person name="Prentice M.B."/>
        </authorList>
    </citation>
    <scope>NUCLEOTIDE SEQUENCE [LARGE SCALE GENOMIC DNA]</scope>
    <source>
        <strain>NCTC 13174 / 8081</strain>
    </source>
</reference>
<sequence length="168" mass="18772">MKRLSIAITSLLMAASASTIAATEPPLNQQQPLEKIAPYPQAEKGMSRQVIFLEPQEDESRFKVELLIGKTIEVDCNRHMLGGNLETRTLSGWGFDYLVMDKISEPASTMMACPDNTRRPQFIAANLGDAAMQRYNSRLPIVVYVPQGVDVKYRIWEAGKDVRSAQVK</sequence>
<evidence type="ECO:0000255" key="1">
    <source>
        <dbReference type="HAMAP-Rule" id="MF_00706"/>
    </source>
</evidence>
<protein>
    <recommendedName>
        <fullName evidence="1">Ecotin</fullName>
    </recommendedName>
</protein>
<feature type="signal peptide" evidence="1">
    <location>
        <begin position="1"/>
        <end position="21"/>
    </location>
</feature>
<feature type="chain" id="PRO_5000201027" description="Ecotin">
    <location>
        <begin position="22"/>
        <end position="168"/>
    </location>
</feature>
<feature type="site" description="Reactive bond" evidence="1">
    <location>
        <begin position="110"/>
        <end position="111"/>
    </location>
</feature>
<feature type="disulfide bond" evidence="1">
    <location>
        <begin position="76"/>
        <end position="113"/>
    </location>
</feature>
<accession>A1JL79</accession>
<keyword id="KW-1015">Disulfide bond</keyword>
<keyword id="KW-0574">Periplasm</keyword>
<keyword id="KW-0646">Protease inhibitor</keyword>
<keyword id="KW-0722">Serine protease inhibitor</keyword>
<keyword id="KW-0732">Signal</keyword>
<dbReference type="EMBL" id="AM286415">
    <property type="protein sequence ID" value="CAL11482.1"/>
    <property type="molecule type" value="Genomic_DNA"/>
</dbReference>
<dbReference type="RefSeq" id="WP_005171589.1">
    <property type="nucleotide sequence ID" value="NC_008800.1"/>
</dbReference>
<dbReference type="RefSeq" id="YP_001005703.1">
    <property type="nucleotide sequence ID" value="NC_008800.1"/>
</dbReference>
<dbReference type="SMR" id="A1JL79"/>
<dbReference type="MEROPS" id="I11.001"/>
<dbReference type="KEGG" id="yen:YE1390"/>
<dbReference type="PATRIC" id="fig|393305.7.peg.1511"/>
<dbReference type="eggNOG" id="COG4574">
    <property type="taxonomic scope" value="Bacteria"/>
</dbReference>
<dbReference type="HOGENOM" id="CLU_111565_0_0_6"/>
<dbReference type="OrthoDB" id="997196at2"/>
<dbReference type="Proteomes" id="UP000000642">
    <property type="component" value="Chromosome"/>
</dbReference>
<dbReference type="GO" id="GO:0042597">
    <property type="term" value="C:periplasmic space"/>
    <property type="evidence" value="ECO:0007669"/>
    <property type="project" value="UniProtKB-SubCell"/>
</dbReference>
<dbReference type="GO" id="GO:0004867">
    <property type="term" value="F:serine-type endopeptidase inhibitor activity"/>
    <property type="evidence" value="ECO:0007669"/>
    <property type="project" value="UniProtKB-UniRule"/>
</dbReference>
<dbReference type="CDD" id="cd00242">
    <property type="entry name" value="Ecotin"/>
    <property type="match status" value="1"/>
</dbReference>
<dbReference type="Gene3D" id="2.60.40.550">
    <property type="entry name" value="Ecotin"/>
    <property type="match status" value="1"/>
</dbReference>
<dbReference type="Gene3D" id="4.10.1230.10">
    <property type="entry name" value="Ecotin, trypsin inhibitor"/>
    <property type="match status" value="1"/>
</dbReference>
<dbReference type="HAMAP" id="MF_00706">
    <property type="entry name" value="Ecotin"/>
    <property type="match status" value="1"/>
</dbReference>
<dbReference type="InterPro" id="IPR027438">
    <property type="entry name" value="Ecotin_C"/>
</dbReference>
<dbReference type="InterPro" id="IPR036198">
    <property type="entry name" value="Ecotin_sf"/>
</dbReference>
<dbReference type="InterPro" id="IPR005658">
    <property type="entry name" value="Prot_inh_ecotin"/>
</dbReference>
<dbReference type="InterPro" id="IPR023084">
    <property type="entry name" value="Prot_inh_ecotin_gammaproteobac"/>
</dbReference>
<dbReference type="NCBIfam" id="NF002987">
    <property type="entry name" value="PRK03719.1"/>
    <property type="match status" value="1"/>
</dbReference>
<dbReference type="PANTHER" id="PTHR35890">
    <property type="match status" value="1"/>
</dbReference>
<dbReference type="PANTHER" id="PTHR35890:SF3">
    <property type="entry name" value="ECOTIN"/>
    <property type="match status" value="1"/>
</dbReference>
<dbReference type="Pfam" id="PF03974">
    <property type="entry name" value="Ecotin"/>
    <property type="match status" value="1"/>
</dbReference>
<dbReference type="PIRSF" id="PIRSF006865">
    <property type="entry name" value="Prot_inh_ecotin"/>
    <property type="match status" value="1"/>
</dbReference>
<dbReference type="SUPFAM" id="SSF49772">
    <property type="entry name" value="Ecotin, trypsin inhibitor"/>
    <property type="match status" value="1"/>
</dbReference>
<name>ECOT_YERE8</name>
<gene>
    <name evidence="1" type="primary">eco</name>
    <name type="ordered locus">YE1390</name>
</gene>
<organism>
    <name type="scientific">Yersinia enterocolitica serotype O:8 / biotype 1B (strain NCTC 13174 / 8081)</name>
    <dbReference type="NCBI Taxonomy" id="393305"/>
    <lineage>
        <taxon>Bacteria</taxon>
        <taxon>Pseudomonadati</taxon>
        <taxon>Pseudomonadota</taxon>
        <taxon>Gammaproteobacteria</taxon>
        <taxon>Enterobacterales</taxon>
        <taxon>Yersiniaceae</taxon>
        <taxon>Yersinia</taxon>
    </lineage>
</organism>
<comment type="function">
    <text evidence="1">General inhibitor of pancreatic serine proteases: inhibits chymotrypsin, trypsin, elastases, factor X, kallikrein as well as a variety of other proteases.</text>
</comment>
<comment type="subunit">
    <text evidence="1">Homodimer.</text>
</comment>
<comment type="subcellular location">
    <subcellularLocation>
        <location evidence="1">Periplasm</location>
    </subcellularLocation>
</comment>
<comment type="similarity">
    <text evidence="1">Belongs to the protease inhibitor I11 (ecotin) family.</text>
</comment>